<feature type="chain" id="PRO_0000169117" description="Toxin CbtA">
    <location>
        <begin position="1"/>
        <end position="124"/>
    </location>
</feature>
<name>CBTA_ECOL6</name>
<evidence type="ECO:0000250" key="1">
    <source>
        <dbReference type="UniProtKB" id="P64524"/>
    </source>
</evidence>
<evidence type="ECO:0000305" key="2"/>
<keyword id="KW-0963">Cytoplasm</keyword>
<keyword id="KW-1185">Reference proteome</keyword>
<keyword id="KW-1277">Toxin-antitoxin system</keyword>
<protein>
    <recommendedName>
        <fullName>Toxin CbtA</fullName>
    </recommendedName>
    <alternativeName>
        <fullName>Toxin YeeV</fullName>
    </alternativeName>
</protein>
<dbReference type="EMBL" id="AE014075">
    <property type="protein sequence ID" value="AAN80986.1"/>
    <property type="molecule type" value="Genomic_DNA"/>
</dbReference>
<dbReference type="RefSeq" id="WP_000854814.1">
    <property type="nucleotide sequence ID" value="NZ_CP051263.1"/>
</dbReference>
<dbReference type="STRING" id="199310.c2532"/>
<dbReference type="KEGG" id="ecc:c2532"/>
<dbReference type="eggNOG" id="ENOG5030KUQ">
    <property type="taxonomic scope" value="Bacteria"/>
</dbReference>
<dbReference type="HOGENOM" id="CLU_129204_1_0_6"/>
<dbReference type="BioCyc" id="ECOL199310:C2532-MONOMER"/>
<dbReference type="Proteomes" id="UP000001410">
    <property type="component" value="Chromosome"/>
</dbReference>
<dbReference type="GO" id="GO:0005737">
    <property type="term" value="C:cytoplasm"/>
    <property type="evidence" value="ECO:0007669"/>
    <property type="project" value="UniProtKB-SubCell"/>
</dbReference>
<dbReference type="InterPro" id="IPR009610">
    <property type="entry name" value="CbtA_toxin"/>
</dbReference>
<dbReference type="Pfam" id="PF06755">
    <property type="entry name" value="CbtA_toxin"/>
    <property type="match status" value="1"/>
</dbReference>
<accession>P64525</accession>
<accession>P76365</accession>
<sequence>MKTLPVLPGQAASSRPSPVEIWQILLSRLLDQHYGLTLNDTPFADERVIEQHIEAGISLCDAVNFLVEKYALVRTDQPGFSACTRSQLINSIDILRARRATGLMTRDNYRTVNNITLGKYPEAK</sequence>
<comment type="function">
    <text evidence="1">Toxic component of a type IV toxin-antitoxin (TA) system. Acts as a dual toxin inhibitor that blocks cell division and cell elongation in genetically separable interactions with FtsZ and MreB. Toxic effects are neutralized by cognate antitoxin CbeA (A0A0H2V8S8), although there is no direct interaction detected between the 2 proteins.</text>
</comment>
<comment type="subunit">
    <text evidence="1">Interacts with FtsZ. Interacts with MreB.</text>
</comment>
<comment type="subcellular location">
    <subcellularLocation>
        <location evidence="1">Cytoplasm</location>
    </subcellularLocation>
</comment>
<comment type="similarity">
    <text evidence="2">Belongs to the CbtA/YkfI/YpjF toxin family.</text>
</comment>
<organism>
    <name type="scientific">Escherichia coli O6:H1 (strain CFT073 / ATCC 700928 / UPEC)</name>
    <dbReference type="NCBI Taxonomy" id="199310"/>
    <lineage>
        <taxon>Bacteria</taxon>
        <taxon>Pseudomonadati</taxon>
        <taxon>Pseudomonadota</taxon>
        <taxon>Gammaproteobacteria</taxon>
        <taxon>Enterobacterales</taxon>
        <taxon>Enterobacteriaceae</taxon>
        <taxon>Escherichia</taxon>
    </lineage>
</organism>
<proteinExistence type="inferred from homology"/>
<gene>
    <name type="primary">cbtA</name>
    <name type="synonym">yeeV</name>
    <name type="ordered locus">c2532</name>
</gene>
<reference key="1">
    <citation type="journal article" date="2002" name="Proc. Natl. Acad. Sci. U.S.A.">
        <title>Extensive mosaic structure revealed by the complete genome sequence of uropathogenic Escherichia coli.</title>
        <authorList>
            <person name="Welch R.A."/>
            <person name="Burland V."/>
            <person name="Plunkett G. III"/>
            <person name="Redford P."/>
            <person name="Roesch P."/>
            <person name="Rasko D."/>
            <person name="Buckles E.L."/>
            <person name="Liou S.-R."/>
            <person name="Boutin A."/>
            <person name="Hackett J."/>
            <person name="Stroud D."/>
            <person name="Mayhew G.F."/>
            <person name="Rose D.J."/>
            <person name="Zhou S."/>
            <person name="Schwartz D.C."/>
            <person name="Perna N.T."/>
            <person name="Mobley H.L.T."/>
            <person name="Donnenberg M.S."/>
            <person name="Blattner F.R."/>
        </authorList>
    </citation>
    <scope>NUCLEOTIDE SEQUENCE [LARGE SCALE GENOMIC DNA]</scope>
    <source>
        <strain>CFT073 / ATCC 700928 / UPEC</strain>
    </source>
</reference>